<reference key="1">
    <citation type="journal article" date="2008" name="DNA Res.">
        <title>The whole-genome sequencing of the obligate intracellular bacterium Orientia tsutsugamushi revealed massive gene amplification during reductive genome evolution.</title>
        <authorList>
            <person name="Nakayama K."/>
            <person name="Yamashita A."/>
            <person name="Kurokawa K."/>
            <person name="Morimoto T."/>
            <person name="Ogawa M."/>
            <person name="Fukuhara M."/>
            <person name="Urakami H."/>
            <person name="Ohnishi M."/>
            <person name="Uchiyama I."/>
            <person name="Ogura Y."/>
            <person name="Ooka T."/>
            <person name="Oshima K."/>
            <person name="Tamura A."/>
            <person name="Hattori M."/>
            <person name="Hayashi T."/>
        </authorList>
    </citation>
    <scope>NUCLEOTIDE SEQUENCE [LARGE SCALE GENOMIC DNA]</scope>
    <source>
        <strain>Ikeda</strain>
    </source>
</reference>
<gene>
    <name evidence="1" type="primary">rpsS</name>
    <name type="ordered locus">OTT_1048</name>
</gene>
<keyword id="KW-0687">Ribonucleoprotein</keyword>
<keyword id="KW-0689">Ribosomal protein</keyword>
<keyword id="KW-0694">RNA-binding</keyword>
<keyword id="KW-0699">rRNA-binding</keyword>
<proteinExistence type="inferred from homology"/>
<name>RS19_ORITI</name>
<comment type="function">
    <text evidence="1">Protein S19 forms a complex with S13 that binds strongly to the 16S ribosomal RNA.</text>
</comment>
<comment type="similarity">
    <text evidence="1">Belongs to the universal ribosomal protein uS19 family.</text>
</comment>
<feature type="chain" id="PRO_1000128013" description="Small ribosomal subunit protein uS19">
    <location>
        <begin position="1"/>
        <end position="92"/>
    </location>
</feature>
<protein>
    <recommendedName>
        <fullName evidence="1">Small ribosomal subunit protein uS19</fullName>
    </recommendedName>
    <alternativeName>
        <fullName evidence="2">30S ribosomal protein S19</fullName>
    </alternativeName>
</protein>
<dbReference type="EMBL" id="AP008981">
    <property type="protein sequence ID" value="BAG40506.1"/>
    <property type="molecule type" value="Genomic_DNA"/>
</dbReference>
<dbReference type="RefSeq" id="WP_011944436.1">
    <property type="nucleotide sequence ID" value="NC_010793.1"/>
</dbReference>
<dbReference type="SMR" id="B3CT09"/>
<dbReference type="GeneID" id="89459053"/>
<dbReference type="KEGG" id="ott:OTT_1048"/>
<dbReference type="HOGENOM" id="CLU_144911_0_1_5"/>
<dbReference type="OrthoDB" id="9797833at2"/>
<dbReference type="Proteomes" id="UP000001033">
    <property type="component" value="Chromosome"/>
</dbReference>
<dbReference type="GO" id="GO:0005737">
    <property type="term" value="C:cytoplasm"/>
    <property type="evidence" value="ECO:0007669"/>
    <property type="project" value="UniProtKB-ARBA"/>
</dbReference>
<dbReference type="GO" id="GO:0015935">
    <property type="term" value="C:small ribosomal subunit"/>
    <property type="evidence" value="ECO:0007669"/>
    <property type="project" value="InterPro"/>
</dbReference>
<dbReference type="GO" id="GO:0019843">
    <property type="term" value="F:rRNA binding"/>
    <property type="evidence" value="ECO:0007669"/>
    <property type="project" value="UniProtKB-UniRule"/>
</dbReference>
<dbReference type="GO" id="GO:0003735">
    <property type="term" value="F:structural constituent of ribosome"/>
    <property type="evidence" value="ECO:0007669"/>
    <property type="project" value="InterPro"/>
</dbReference>
<dbReference type="GO" id="GO:0000028">
    <property type="term" value="P:ribosomal small subunit assembly"/>
    <property type="evidence" value="ECO:0007669"/>
    <property type="project" value="TreeGrafter"/>
</dbReference>
<dbReference type="GO" id="GO:0006412">
    <property type="term" value="P:translation"/>
    <property type="evidence" value="ECO:0007669"/>
    <property type="project" value="UniProtKB-UniRule"/>
</dbReference>
<dbReference type="FunFam" id="3.30.860.10:FF:000001">
    <property type="entry name" value="30S ribosomal protein S19"/>
    <property type="match status" value="1"/>
</dbReference>
<dbReference type="Gene3D" id="3.30.860.10">
    <property type="entry name" value="30s Ribosomal Protein S19, Chain A"/>
    <property type="match status" value="1"/>
</dbReference>
<dbReference type="HAMAP" id="MF_00531">
    <property type="entry name" value="Ribosomal_uS19"/>
    <property type="match status" value="1"/>
</dbReference>
<dbReference type="InterPro" id="IPR002222">
    <property type="entry name" value="Ribosomal_uS19"/>
</dbReference>
<dbReference type="InterPro" id="IPR005732">
    <property type="entry name" value="Ribosomal_uS19_bac-type"/>
</dbReference>
<dbReference type="InterPro" id="IPR020934">
    <property type="entry name" value="Ribosomal_uS19_CS"/>
</dbReference>
<dbReference type="InterPro" id="IPR023575">
    <property type="entry name" value="Ribosomal_uS19_SF"/>
</dbReference>
<dbReference type="NCBIfam" id="TIGR01050">
    <property type="entry name" value="rpsS_bact"/>
    <property type="match status" value="1"/>
</dbReference>
<dbReference type="PANTHER" id="PTHR11880">
    <property type="entry name" value="RIBOSOMAL PROTEIN S19P FAMILY MEMBER"/>
    <property type="match status" value="1"/>
</dbReference>
<dbReference type="PANTHER" id="PTHR11880:SF8">
    <property type="entry name" value="SMALL RIBOSOMAL SUBUNIT PROTEIN US19M"/>
    <property type="match status" value="1"/>
</dbReference>
<dbReference type="Pfam" id="PF00203">
    <property type="entry name" value="Ribosomal_S19"/>
    <property type="match status" value="1"/>
</dbReference>
<dbReference type="PIRSF" id="PIRSF002144">
    <property type="entry name" value="Ribosomal_S19"/>
    <property type="match status" value="1"/>
</dbReference>
<dbReference type="PRINTS" id="PR00975">
    <property type="entry name" value="RIBOSOMALS19"/>
</dbReference>
<dbReference type="SUPFAM" id="SSF54570">
    <property type="entry name" value="Ribosomal protein S19"/>
    <property type="match status" value="1"/>
</dbReference>
<dbReference type="PROSITE" id="PS00323">
    <property type="entry name" value="RIBOSOMAL_S19"/>
    <property type="match status" value="1"/>
</dbReference>
<organism>
    <name type="scientific">Orientia tsutsugamushi (strain Ikeda)</name>
    <name type="common">Rickettsia tsutsugamushi</name>
    <dbReference type="NCBI Taxonomy" id="334380"/>
    <lineage>
        <taxon>Bacteria</taxon>
        <taxon>Pseudomonadati</taxon>
        <taxon>Pseudomonadota</taxon>
        <taxon>Alphaproteobacteria</taxon>
        <taxon>Rickettsiales</taxon>
        <taxon>Rickettsiaceae</taxon>
        <taxon>Rickettsieae</taxon>
        <taxon>Orientia</taxon>
    </lineage>
</organism>
<sequence>MARSIWKGPFVRESLIKKVNKLIESGKSSVIKTWSRESAIIPLFVRFVFAVHNGNKFIPVVITEEMVGRKLGEFAPTRTFYGHAADRKVKRK</sequence>
<evidence type="ECO:0000255" key="1">
    <source>
        <dbReference type="HAMAP-Rule" id="MF_00531"/>
    </source>
</evidence>
<evidence type="ECO:0000305" key="2"/>
<accession>B3CT09</accession>